<keyword id="KW-0963">Cytoplasm</keyword>
<keyword id="KW-0560">Oxidoreductase</keyword>
<keyword id="KW-1185">Reference proteome</keyword>
<feature type="chain" id="PRO_1000092174" description="Phosphoadenosine 5'-phosphosulfate reductase">
    <location>
        <begin position="1"/>
        <end position="243"/>
    </location>
</feature>
<feature type="active site" description="Nucleophile; cysteine thiosulfonate intermediate" evidence="1">
    <location>
        <position position="239"/>
    </location>
</feature>
<dbReference type="EC" id="1.8.4.8" evidence="1"/>
<dbReference type="EMBL" id="CU468135">
    <property type="protein sequence ID" value="CAO97755.1"/>
    <property type="molecule type" value="Genomic_DNA"/>
</dbReference>
<dbReference type="RefSeq" id="WP_012442412.1">
    <property type="nucleotide sequence ID" value="NC_010694.1"/>
</dbReference>
<dbReference type="SMR" id="B2VG05"/>
<dbReference type="STRING" id="465817.ETA_27090"/>
<dbReference type="KEGG" id="eta:ETA_27090"/>
<dbReference type="eggNOG" id="COG0175">
    <property type="taxonomic scope" value="Bacteria"/>
</dbReference>
<dbReference type="HOGENOM" id="CLU_044089_3_0_6"/>
<dbReference type="OrthoDB" id="9794018at2"/>
<dbReference type="UniPathway" id="UPA00140">
    <property type="reaction ID" value="UER00206"/>
</dbReference>
<dbReference type="Proteomes" id="UP000001726">
    <property type="component" value="Chromosome"/>
</dbReference>
<dbReference type="GO" id="GO:0005737">
    <property type="term" value="C:cytoplasm"/>
    <property type="evidence" value="ECO:0007669"/>
    <property type="project" value="UniProtKB-SubCell"/>
</dbReference>
<dbReference type="GO" id="GO:0004604">
    <property type="term" value="F:phosphoadenylyl-sulfate reductase (thioredoxin) activity"/>
    <property type="evidence" value="ECO:0007669"/>
    <property type="project" value="UniProtKB-UniRule"/>
</dbReference>
<dbReference type="GO" id="GO:0070814">
    <property type="term" value="P:hydrogen sulfide biosynthetic process"/>
    <property type="evidence" value="ECO:0007669"/>
    <property type="project" value="UniProtKB-UniRule"/>
</dbReference>
<dbReference type="GO" id="GO:0019379">
    <property type="term" value="P:sulfate assimilation, phosphoadenylyl sulfate reduction by phosphoadenylyl-sulfate reductase (thioredoxin)"/>
    <property type="evidence" value="ECO:0007669"/>
    <property type="project" value="UniProtKB-UniRule"/>
</dbReference>
<dbReference type="CDD" id="cd23945">
    <property type="entry name" value="PAPS_reductase"/>
    <property type="match status" value="1"/>
</dbReference>
<dbReference type="FunFam" id="3.40.50.620:FF:000043">
    <property type="entry name" value="Phosphoadenosine phosphosulfate reductase"/>
    <property type="match status" value="1"/>
</dbReference>
<dbReference type="Gene3D" id="3.40.50.620">
    <property type="entry name" value="HUPs"/>
    <property type="match status" value="1"/>
</dbReference>
<dbReference type="HAMAP" id="MF_00063">
    <property type="entry name" value="CysH"/>
    <property type="match status" value="1"/>
</dbReference>
<dbReference type="InterPro" id="IPR004511">
    <property type="entry name" value="PAPS/APS_Rdtase"/>
</dbReference>
<dbReference type="InterPro" id="IPR002500">
    <property type="entry name" value="PAPS_reduct_dom"/>
</dbReference>
<dbReference type="InterPro" id="IPR011800">
    <property type="entry name" value="PAPS_reductase_CysH"/>
</dbReference>
<dbReference type="InterPro" id="IPR014729">
    <property type="entry name" value="Rossmann-like_a/b/a_fold"/>
</dbReference>
<dbReference type="NCBIfam" id="TIGR00434">
    <property type="entry name" value="cysH"/>
    <property type="match status" value="1"/>
</dbReference>
<dbReference type="NCBIfam" id="TIGR02057">
    <property type="entry name" value="PAPS_reductase"/>
    <property type="match status" value="1"/>
</dbReference>
<dbReference type="NCBIfam" id="NF002537">
    <property type="entry name" value="PRK02090.1"/>
    <property type="match status" value="1"/>
</dbReference>
<dbReference type="PANTHER" id="PTHR46509">
    <property type="entry name" value="PHOSPHOADENOSINE PHOSPHOSULFATE REDUCTASE"/>
    <property type="match status" value="1"/>
</dbReference>
<dbReference type="PANTHER" id="PTHR46509:SF1">
    <property type="entry name" value="PHOSPHOADENOSINE PHOSPHOSULFATE REDUCTASE"/>
    <property type="match status" value="1"/>
</dbReference>
<dbReference type="Pfam" id="PF01507">
    <property type="entry name" value="PAPS_reduct"/>
    <property type="match status" value="1"/>
</dbReference>
<dbReference type="PIRSF" id="PIRSF000857">
    <property type="entry name" value="PAPS_reductase"/>
    <property type="match status" value="1"/>
</dbReference>
<dbReference type="SUPFAM" id="SSF52402">
    <property type="entry name" value="Adenine nucleotide alpha hydrolases-like"/>
    <property type="match status" value="1"/>
</dbReference>
<gene>
    <name evidence="1" type="primary">cysH</name>
    <name type="ordered locus">ETA_27090</name>
</gene>
<organism>
    <name type="scientific">Erwinia tasmaniensis (strain DSM 17950 / CFBP 7177 / CIP 109463 / NCPPB 4357 / Et1/99)</name>
    <dbReference type="NCBI Taxonomy" id="465817"/>
    <lineage>
        <taxon>Bacteria</taxon>
        <taxon>Pseudomonadati</taxon>
        <taxon>Pseudomonadota</taxon>
        <taxon>Gammaproteobacteria</taxon>
        <taxon>Enterobacterales</taxon>
        <taxon>Erwiniaceae</taxon>
        <taxon>Erwinia</taxon>
    </lineage>
</organism>
<proteinExistence type="inferred from homology"/>
<name>CYSH_ERWT9</name>
<accession>B2VG05</accession>
<sequence>MALLELSELNQLPKVERVMALAEINNRLDKLSAEDRVLWGLENLPGQAVLTSSFGIQAAVSLHLVTRQKPDIPVILTDTGYLFPETYRFIDQLTEKLDLNLQVFRAEQSPAWQEARYGKLWEQGVEGIERYNQINKVEPMNRALETLQGQTWFAGLRRDQSGSRAHLPVLAVKKGIFKLLPIIDWDNRQVYQYLQQHGLSYHPLWEQGYLSVGDTHTTRKWEPGMAEEETRFFGLKRECGLHE</sequence>
<reference key="1">
    <citation type="journal article" date="2008" name="Environ. Microbiol.">
        <title>The genome of Erwinia tasmaniensis strain Et1/99, a non-pathogenic bacterium in the genus Erwinia.</title>
        <authorList>
            <person name="Kube M."/>
            <person name="Migdoll A.M."/>
            <person name="Mueller I."/>
            <person name="Kuhl H."/>
            <person name="Beck A."/>
            <person name="Reinhardt R."/>
            <person name="Geider K."/>
        </authorList>
    </citation>
    <scope>NUCLEOTIDE SEQUENCE [LARGE SCALE GENOMIC DNA]</scope>
    <source>
        <strain>DSM 17950 / CFBP 7177 / CIP 109463 / NCPPB 4357 / Et1/99</strain>
    </source>
</reference>
<evidence type="ECO:0000255" key="1">
    <source>
        <dbReference type="HAMAP-Rule" id="MF_00063"/>
    </source>
</evidence>
<comment type="function">
    <text evidence="1">Catalyzes the formation of sulfite from phosphoadenosine 5'-phosphosulfate (PAPS) using thioredoxin as an electron donor.</text>
</comment>
<comment type="catalytic activity">
    <reaction evidence="1">
        <text>[thioredoxin]-disulfide + sulfite + adenosine 3',5'-bisphosphate + 2 H(+) = [thioredoxin]-dithiol + 3'-phosphoadenylyl sulfate</text>
        <dbReference type="Rhea" id="RHEA:11724"/>
        <dbReference type="Rhea" id="RHEA-COMP:10698"/>
        <dbReference type="Rhea" id="RHEA-COMP:10700"/>
        <dbReference type="ChEBI" id="CHEBI:15378"/>
        <dbReference type="ChEBI" id="CHEBI:17359"/>
        <dbReference type="ChEBI" id="CHEBI:29950"/>
        <dbReference type="ChEBI" id="CHEBI:50058"/>
        <dbReference type="ChEBI" id="CHEBI:58339"/>
        <dbReference type="ChEBI" id="CHEBI:58343"/>
        <dbReference type="EC" id="1.8.4.8"/>
    </reaction>
</comment>
<comment type="pathway">
    <text evidence="1">Sulfur metabolism; hydrogen sulfide biosynthesis; sulfite from sulfate: step 3/3.</text>
</comment>
<comment type="subcellular location">
    <subcellularLocation>
        <location evidence="1">Cytoplasm</location>
    </subcellularLocation>
</comment>
<comment type="similarity">
    <text evidence="1">Belongs to the PAPS reductase family. CysH subfamily.</text>
</comment>
<protein>
    <recommendedName>
        <fullName evidence="1">Phosphoadenosine 5'-phosphosulfate reductase</fullName>
        <shortName evidence="1">PAPS reductase</shortName>
        <ecNumber evidence="1">1.8.4.8</ecNumber>
    </recommendedName>
    <alternativeName>
        <fullName evidence="1">3'-phosphoadenylylsulfate reductase</fullName>
    </alternativeName>
    <alternativeName>
        <fullName evidence="1">PAPS reductase, thioredoxin dependent</fullName>
    </alternativeName>
    <alternativeName>
        <fullName evidence="1">PAPS sulfotransferase</fullName>
    </alternativeName>
    <alternativeName>
        <fullName evidence="1">PAdoPS reductase</fullName>
    </alternativeName>
</protein>